<evidence type="ECO:0000255" key="1"/>
<evidence type="ECO:0000256" key="2">
    <source>
        <dbReference type="SAM" id="MobiDB-lite"/>
    </source>
</evidence>
<evidence type="ECO:0000305" key="3"/>
<protein>
    <recommendedName>
        <fullName>Transmembrane protein 221</fullName>
    </recommendedName>
</protein>
<keyword id="KW-0472">Membrane</keyword>
<keyword id="KW-1185">Reference proteome</keyword>
<keyword id="KW-0812">Transmembrane</keyword>
<keyword id="KW-1133">Transmembrane helix</keyword>
<name>TM221_MOUSE</name>
<dbReference type="EMBL" id="AC162033">
    <property type="status" value="NOT_ANNOTATED_CDS"/>
    <property type="molecule type" value="Genomic_DNA"/>
</dbReference>
<dbReference type="EMBL" id="BC033932">
    <property type="protein sequence ID" value="AAH33932.1"/>
    <property type="molecule type" value="mRNA"/>
</dbReference>
<dbReference type="EMBL" id="BC147816">
    <property type="protein sequence ID" value="AAI47817.1"/>
    <property type="molecule type" value="mRNA"/>
</dbReference>
<dbReference type="EMBL" id="BC147831">
    <property type="protein sequence ID" value="AAI47832.1"/>
    <property type="molecule type" value="mRNA"/>
</dbReference>
<dbReference type="CCDS" id="CCDS52586.1"/>
<dbReference type="RefSeq" id="NP_001093932.1">
    <property type="nucleotide sequence ID" value="NM_001100462.1"/>
</dbReference>
<dbReference type="FunCoup" id="Q8K071">
    <property type="interactions" value="1"/>
</dbReference>
<dbReference type="STRING" id="10090.ENSMUSP00000058317"/>
<dbReference type="PaxDb" id="10090-ENSMUSP00000058317"/>
<dbReference type="Ensembl" id="ENSMUST00000052072.8">
    <property type="protein sequence ID" value="ENSMUSP00000058317.7"/>
    <property type="gene ID" value="ENSMUSG00000043664.8"/>
</dbReference>
<dbReference type="GeneID" id="434325"/>
<dbReference type="KEGG" id="mmu:434325"/>
<dbReference type="UCSC" id="uc012gft.1">
    <property type="organism name" value="mouse"/>
</dbReference>
<dbReference type="AGR" id="MGI:3525074"/>
<dbReference type="CTD" id="100130519"/>
<dbReference type="MGI" id="MGI:3525074">
    <property type="gene designation" value="Tmem221"/>
</dbReference>
<dbReference type="VEuPathDB" id="HostDB:ENSMUSG00000043664"/>
<dbReference type="eggNOG" id="ENOG502RTGK">
    <property type="taxonomic scope" value="Eukaryota"/>
</dbReference>
<dbReference type="GeneTree" id="ENSGT00390000001907"/>
<dbReference type="HOGENOM" id="CLU_079663_0_0_1"/>
<dbReference type="InParanoid" id="Q8K071"/>
<dbReference type="OMA" id="RSDWFFH"/>
<dbReference type="OrthoDB" id="8873919at2759"/>
<dbReference type="PhylomeDB" id="Q8K071"/>
<dbReference type="TreeFam" id="TF336085"/>
<dbReference type="BioGRID-ORCS" id="434325">
    <property type="hits" value="3 hits in 75 CRISPR screens"/>
</dbReference>
<dbReference type="PRO" id="PR:Q8K071"/>
<dbReference type="Proteomes" id="UP000000589">
    <property type="component" value="Chromosome 8"/>
</dbReference>
<dbReference type="RNAct" id="Q8K071">
    <property type="molecule type" value="protein"/>
</dbReference>
<dbReference type="Bgee" id="ENSMUSG00000043664">
    <property type="expression patterns" value="Expressed in embryonic cell in blastocyst and 37 other cell types or tissues"/>
</dbReference>
<dbReference type="GO" id="GO:0016020">
    <property type="term" value="C:membrane"/>
    <property type="evidence" value="ECO:0007669"/>
    <property type="project" value="UniProtKB-SubCell"/>
</dbReference>
<dbReference type="InterPro" id="IPR029201">
    <property type="entry name" value="Jiraiya"/>
</dbReference>
<dbReference type="InterPro" id="IPR053101">
    <property type="entry name" value="TM221"/>
</dbReference>
<dbReference type="PANTHER" id="PTHR36132">
    <property type="entry name" value="TRANSMEMBRANE PROTEIN 221"/>
    <property type="match status" value="1"/>
</dbReference>
<dbReference type="PANTHER" id="PTHR36132:SF1">
    <property type="entry name" value="TRANSMEMBRANE PROTEIN 221"/>
    <property type="match status" value="1"/>
</dbReference>
<dbReference type="Pfam" id="PF15038">
    <property type="entry name" value="Jiraiya"/>
    <property type="match status" value="1"/>
</dbReference>
<proteinExistence type="evidence at transcript level"/>
<comment type="subcellular location">
    <subcellularLocation>
        <location evidence="3">Membrane</location>
        <topology evidence="3">Multi-pass membrane protein</topology>
    </subcellularLocation>
</comment>
<reference key="1">
    <citation type="journal article" date="2009" name="PLoS Biol.">
        <title>Lineage-specific biology revealed by a finished genome assembly of the mouse.</title>
        <authorList>
            <person name="Church D.M."/>
            <person name="Goodstadt L."/>
            <person name="Hillier L.W."/>
            <person name="Zody M.C."/>
            <person name="Goldstein S."/>
            <person name="She X."/>
            <person name="Bult C.J."/>
            <person name="Agarwala R."/>
            <person name="Cherry J.L."/>
            <person name="DiCuccio M."/>
            <person name="Hlavina W."/>
            <person name="Kapustin Y."/>
            <person name="Meric P."/>
            <person name="Maglott D."/>
            <person name="Birtle Z."/>
            <person name="Marques A.C."/>
            <person name="Graves T."/>
            <person name="Zhou S."/>
            <person name="Teague B."/>
            <person name="Potamousis K."/>
            <person name="Churas C."/>
            <person name="Place M."/>
            <person name="Herschleb J."/>
            <person name="Runnheim R."/>
            <person name="Forrest D."/>
            <person name="Amos-Landgraf J."/>
            <person name="Schwartz D.C."/>
            <person name="Cheng Z."/>
            <person name="Lindblad-Toh K."/>
            <person name="Eichler E.E."/>
            <person name="Ponting C.P."/>
        </authorList>
    </citation>
    <scope>NUCLEOTIDE SEQUENCE [LARGE SCALE GENOMIC DNA]</scope>
    <source>
        <strain>C57BL/6J</strain>
    </source>
</reference>
<reference key="2">
    <citation type="journal article" date="2004" name="Genome Res.">
        <title>The status, quality, and expansion of the NIH full-length cDNA project: the Mammalian Gene Collection (MGC).</title>
        <authorList>
            <consortium name="The MGC Project Team"/>
        </authorList>
    </citation>
    <scope>NUCLEOTIDE SEQUENCE [LARGE SCALE MRNA]</scope>
    <source>
        <strain>C57BL/6J</strain>
        <tissue>Brain</tissue>
        <tissue>Thymus</tissue>
    </source>
</reference>
<accession>Q8K071</accession>
<accession>B2RWI9</accession>
<organism>
    <name type="scientific">Mus musculus</name>
    <name type="common">Mouse</name>
    <dbReference type="NCBI Taxonomy" id="10090"/>
    <lineage>
        <taxon>Eukaryota</taxon>
        <taxon>Metazoa</taxon>
        <taxon>Chordata</taxon>
        <taxon>Craniata</taxon>
        <taxon>Vertebrata</taxon>
        <taxon>Euteleostomi</taxon>
        <taxon>Mammalia</taxon>
        <taxon>Eutheria</taxon>
        <taxon>Euarchontoglires</taxon>
        <taxon>Glires</taxon>
        <taxon>Rodentia</taxon>
        <taxon>Myomorpha</taxon>
        <taxon>Muroidea</taxon>
        <taxon>Muridae</taxon>
        <taxon>Murinae</taxon>
        <taxon>Mus</taxon>
        <taxon>Mus</taxon>
    </lineage>
</organism>
<gene>
    <name type="primary">Tmem221</name>
</gene>
<feature type="chain" id="PRO_0000332135" description="Transmembrane protein 221">
    <location>
        <begin position="1"/>
        <end position="230"/>
    </location>
</feature>
<feature type="transmembrane region" description="Helical" evidence="1">
    <location>
        <begin position="12"/>
        <end position="32"/>
    </location>
</feature>
<feature type="transmembrane region" description="Helical" evidence="1">
    <location>
        <begin position="73"/>
        <end position="93"/>
    </location>
</feature>
<feature type="transmembrane region" description="Helical" evidence="1">
    <location>
        <begin position="125"/>
        <end position="145"/>
    </location>
</feature>
<feature type="transmembrane region" description="Helical" evidence="1">
    <location>
        <begin position="147"/>
        <end position="167"/>
    </location>
</feature>
<feature type="region of interest" description="Disordered" evidence="2">
    <location>
        <begin position="184"/>
        <end position="230"/>
    </location>
</feature>
<feature type="compositionally biased region" description="Basic and acidic residues" evidence="2">
    <location>
        <begin position="194"/>
        <end position="204"/>
    </location>
</feature>
<sequence length="230" mass="23954">MGRSYGGRVLAAMTLLGIPAAVLVALAAQLLFQLQAGRAELRRVRTDGLHPELDPDAGLPEAAAGALLPLATALAALAQVLGLSCLLLAALCGHLGAELARGPGPGRSDWFLYDCRLLRHSALGLFCCGVSVYLAALAIYALLLFEIEAGAAAASILGSGALILVAIMTHTLFRAVQATRRGLRELSPPSFEDEPARPSEDSKSGCRAQPPQDEETETPIGAVTHQGSHF</sequence>